<name>CH10_CHLFF</name>
<organism>
    <name type="scientific">Chlamydia felis (strain Fe/C-56)</name>
    <name type="common">Chlamydophila felis</name>
    <dbReference type="NCBI Taxonomy" id="264202"/>
    <lineage>
        <taxon>Bacteria</taxon>
        <taxon>Pseudomonadati</taxon>
        <taxon>Chlamydiota</taxon>
        <taxon>Chlamydiia</taxon>
        <taxon>Chlamydiales</taxon>
        <taxon>Chlamydiaceae</taxon>
        <taxon>Chlamydia/Chlamydophila group</taxon>
        <taxon>Chlamydia</taxon>
    </lineage>
</organism>
<sequence length="102" mass="11221">MSDQATALKIKPLGDRILVKREEEDTTSHGGIILPDTAKKKQDRAEVLALGTGKRDKDGQILPFEVKVGDIVLIDKYAGQELTIEGEEYVIVQESEVMAVLN</sequence>
<dbReference type="EMBL" id="AP006861">
    <property type="protein sequence ID" value="BAE81138.1"/>
    <property type="molecule type" value="Genomic_DNA"/>
</dbReference>
<dbReference type="RefSeq" id="WP_011457918.1">
    <property type="nucleotide sequence ID" value="NC_007899.1"/>
</dbReference>
<dbReference type="SMR" id="Q255A0"/>
<dbReference type="STRING" id="264202.CF0366"/>
<dbReference type="KEGG" id="cfe:CF0366"/>
<dbReference type="eggNOG" id="COG0234">
    <property type="taxonomic scope" value="Bacteria"/>
</dbReference>
<dbReference type="HOGENOM" id="CLU_132825_1_0_0"/>
<dbReference type="OrthoDB" id="9806791at2"/>
<dbReference type="Proteomes" id="UP000001260">
    <property type="component" value="Chromosome"/>
</dbReference>
<dbReference type="GO" id="GO:0005737">
    <property type="term" value="C:cytoplasm"/>
    <property type="evidence" value="ECO:0007669"/>
    <property type="project" value="UniProtKB-SubCell"/>
</dbReference>
<dbReference type="GO" id="GO:0005524">
    <property type="term" value="F:ATP binding"/>
    <property type="evidence" value="ECO:0007669"/>
    <property type="project" value="InterPro"/>
</dbReference>
<dbReference type="GO" id="GO:0046872">
    <property type="term" value="F:metal ion binding"/>
    <property type="evidence" value="ECO:0007669"/>
    <property type="project" value="TreeGrafter"/>
</dbReference>
<dbReference type="GO" id="GO:0044183">
    <property type="term" value="F:protein folding chaperone"/>
    <property type="evidence" value="ECO:0007669"/>
    <property type="project" value="InterPro"/>
</dbReference>
<dbReference type="GO" id="GO:0051087">
    <property type="term" value="F:protein-folding chaperone binding"/>
    <property type="evidence" value="ECO:0007669"/>
    <property type="project" value="TreeGrafter"/>
</dbReference>
<dbReference type="GO" id="GO:0051082">
    <property type="term" value="F:unfolded protein binding"/>
    <property type="evidence" value="ECO:0007669"/>
    <property type="project" value="TreeGrafter"/>
</dbReference>
<dbReference type="GO" id="GO:0051085">
    <property type="term" value="P:chaperone cofactor-dependent protein refolding"/>
    <property type="evidence" value="ECO:0007669"/>
    <property type="project" value="TreeGrafter"/>
</dbReference>
<dbReference type="CDD" id="cd00320">
    <property type="entry name" value="cpn10"/>
    <property type="match status" value="1"/>
</dbReference>
<dbReference type="FunFam" id="2.30.33.40:FF:000007">
    <property type="entry name" value="10 kDa chaperonin"/>
    <property type="match status" value="1"/>
</dbReference>
<dbReference type="Gene3D" id="2.30.33.40">
    <property type="entry name" value="GroES chaperonin"/>
    <property type="match status" value="1"/>
</dbReference>
<dbReference type="HAMAP" id="MF_00580">
    <property type="entry name" value="CH10"/>
    <property type="match status" value="1"/>
</dbReference>
<dbReference type="InterPro" id="IPR020818">
    <property type="entry name" value="Chaperonin_GroES"/>
</dbReference>
<dbReference type="InterPro" id="IPR037124">
    <property type="entry name" value="Chaperonin_GroES_sf"/>
</dbReference>
<dbReference type="InterPro" id="IPR018369">
    <property type="entry name" value="Chaprnonin_Cpn10_CS"/>
</dbReference>
<dbReference type="InterPro" id="IPR011032">
    <property type="entry name" value="GroES-like_sf"/>
</dbReference>
<dbReference type="NCBIfam" id="NF001531">
    <property type="entry name" value="PRK00364.2-2"/>
    <property type="match status" value="1"/>
</dbReference>
<dbReference type="NCBIfam" id="NF001533">
    <property type="entry name" value="PRK00364.2-4"/>
    <property type="match status" value="1"/>
</dbReference>
<dbReference type="PANTHER" id="PTHR10772">
    <property type="entry name" value="10 KDA HEAT SHOCK PROTEIN"/>
    <property type="match status" value="1"/>
</dbReference>
<dbReference type="PANTHER" id="PTHR10772:SF58">
    <property type="entry name" value="CO-CHAPERONIN GROES"/>
    <property type="match status" value="1"/>
</dbReference>
<dbReference type="Pfam" id="PF00166">
    <property type="entry name" value="Cpn10"/>
    <property type="match status" value="1"/>
</dbReference>
<dbReference type="PRINTS" id="PR00297">
    <property type="entry name" value="CHAPERONIN10"/>
</dbReference>
<dbReference type="SMART" id="SM00883">
    <property type="entry name" value="Cpn10"/>
    <property type="match status" value="1"/>
</dbReference>
<dbReference type="SUPFAM" id="SSF50129">
    <property type="entry name" value="GroES-like"/>
    <property type="match status" value="1"/>
</dbReference>
<dbReference type="PROSITE" id="PS00681">
    <property type="entry name" value="CHAPERONINS_CPN10"/>
    <property type="match status" value="1"/>
</dbReference>
<accession>Q255A0</accession>
<reference key="1">
    <citation type="journal article" date="2006" name="DNA Res.">
        <title>Genome sequence of the cat pathogen, Chlamydophila felis.</title>
        <authorList>
            <person name="Azuma Y."/>
            <person name="Hirakawa H."/>
            <person name="Yamashita A."/>
            <person name="Cai Y."/>
            <person name="Rahman M.A."/>
            <person name="Suzuki H."/>
            <person name="Mitaku S."/>
            <person name="Toh H."/>
            <person name="Goto S."/>
            <person name="Murakami T."/>
            <person name="Sugi K."/>
            <person name="Hayashi H."/>
            <person name="Fukushi H."/>
            <person name="Hattori M."/>
            <person name="Kuhara S."/>
            <person name="Shirai M."/>
        </authorList>
    </citation>
    <scope>NUCLEOTIDE SEQUENCE [LARGE SCALE GENOMIC DNA]</scope>
    <source>
        <strain>Fe/C-56</strain>
    </source>
</reference>
<comment type="function">
    <text evidence="1">Together with the chaperonin GroEL, plays an essential role in assisting protein folding. The GroEL-GroES system forms a nano-cage that allows encapsulation of the non-native substrate proteins and provides a physical environment optimized to promote and accelerate protein folding. GroES binds to the apical surface of the GroEL ring, thereby capping the opening of the GroEL channel.</text>
</comment>
<comment type="subunit">
    <text evidence="1">Heptamer of 7 subunits arranged in a ring. Interacts with the chaperonin GroEL.</text>
</comment>
<comment type="subcellular location">
    <subcellularLocation>
        <location evidence="1">Cytoplasm</location>
    </subcellularLocation>
</comment>
<comment type="similarity">
    <text evidence="1">Belongs to the GroES chaperonin family.</text>
</comment>
<gene>
    <name evidence="1" type="primary">groES</name>
    <name evidence="1" type="synonym">groS</name>
    <name type="ordered locus">CF0366</name>
</gene>
<evidence type="ECO:0000255" key="1">
    <source>
        <dbReference type="HAMAP-Rule" id="MF_00580"/>
    </source>
</evidence>
<proteinExistence type="inferred from homology"/>
<keyword id="KW-0143">Chaperone</keyword>
<keyword id="KW-0963">Cytoplasm</keyword>
<keyword id="KW-0346">Stress response</keyword>
<protein>
    <recommendedName>
        <fullName evidence="1">Co-chaperonin GroES</fullName>
    </recommendedName>
    <alternativeName>
        <fullName evidence="1">10 kDa chaperonin</fullName>
    </alternativeName>
    <alternativeName>
        <fullName evidence="1">Chaperonin-10</fullName>
        <shortName evidence="1">Cpn10</shortName>
    </alternativeName>
</protein>
<feature type="chain" id="PRO_1000025232" description="Co-chaperonin GroES">
    <location>
        <begin position="1"/>
        <end position="102"/>
    </location>
</feature>